<accession>Q9ZDE8</accession>
<comment type="catalytic activity">
    <reaction>
        <text>GTP + H2O = 7,8-dihydroneopterin 3'-triphosphate + formate + H(+)</text>
        <dbReference type="Rhea" id="RHEA:17473"/>
        <dbReference type="ChEBI" id="CHEBI:15377"/>
        <dbReference type="ChEBI" id="CHEBI:15378"/>
        <dbReference type="ChEBI" id="CHEBI:15740"/>
        <dbReference type="ChEBI" id="CHEBI:37565"/>
        <dbReference type="ChEBI" id="CHEBI:58462"/>
        <dbReference type="EC" id="3.5.4.16"/>
    </reaction>
</comment>
<comment type="pathway">
    <text>Cofactor biosynthesis; 7,8-dihydroneopterin triphosphate biosynthesis; 7,8-dihydroneopterin triphosphate from GTP: step 1/1.</text>
</comment>
<comment type="subunit">
    <text evidence="1">Toroid-shaped homodecamer, composed of two pentamers of five dimers.</text>
</comment>
<comment type="similarity">
    <text evidence="2">Belongs to the GTP cyclohydrolase I family.</text>
</comment>
<dbReference type="EC" id="3.5.4.16"/>
<dbReference type="EMBL" id="AJ235271">
    <property type="protein sequence ID" value="CAA14840.1"/>
    <property type="molecule type" value="Genomic_DNA"/>
</dbReference>
<dbReference type="PIR" id="F71695">
    <property type="entry name" value="F71695"/>
</dbReference>
<dbReference type="RefSeq" id="NP_220764.1">
    <property type="nucleotide sequence ID" value="NC_000963.1"/>
</dbReference>
<dbReference type="RefSeq" id="WP_004597557.1">
    <property type="nucleotide sequence ID" value="NC_000963.1"/>
</dbReference>
<dbReference type="SMR" id="Q9ZDE8"/>
<dbReference type="STRING" id="272947.gene:17555463"/>
<dbReference type="EnsemblBacteria" id="CAA14840">
    <property type="protein sequence ID" value="CAA14840"/>
    <property type="gene ID" value="CAA14840"/>
</dbReference>
<dbReference type="GeneID" id="57569507"/>
<dbReference type="KEGG" id="rpr:RP383"/>
<dbReference type="PATRIC" id="fig|272947.5.peg.393"/>
<dbReference type="eggNOG" id="COG0302">
    <property type="taxonomic scope" value="Bacteria"/>
</dbReference>
<dbReference type="HOGENOM" id="CLU_049768_3_1_5"/>
<dbReference type="OrthoDB" id="9801207at2"/>
<dbReference type="UniPathway" id="UPA00848">
    <property type="reaction ID" value="UER00151"/>
</dbReference>
<dbReference type="Proteomes" id="UP000002480">
    <property type="component" value="Chromosome"/>
</dbReference>
<dbReference type="GO" id="GO:0005737">
    <property type="term" value="C:cytoplasm"/>
    <property type="evidence" value="ECO:0007669"/>
    <property type="project" value="TreeGrafter"/>
</dbReference>
<dbReference type="GO" id="GO:0005525">
    <property type="term" value="F:GTP binding"/>
    <property type="evidence" value="ECO:0007669"/>
    <property type="project" value="UniProtKB-KW"/>
</dbReference>
<dbReference type="GO" id="GO:0003934">
    <property type="term" value="F:GTP cyclohydrolase I activity"/>
    <property type="evidence" value="ECO:0007669"/>
    <property type="project" value="UniProtKB-UniRule"/>
</dbReference>
<dbReference type="GO" id="GO:0008270">
    <property type="term" value="F:zinc ion binding"/>
    <property type="evidence" value="ECO:0007669"/>
    <property type="project" value="UniProtKB-UniRule"/>
</dbReference>
<dbReference type="GO" id="GO:0006730">
    <property type="term" value="P:one-carbon metabolic process"/>
    <property type="evidence" value="ECO:0007669"/>
    <property type="project" value="UniProtKB-UniRule"/>
</dbReference>
<dbReference type="GO" id="GO:0006729">
    <property type="term" value="P:tetrahydrobiopterin biosynthetic process"/>
    <property type="evidence" value="ECO:0007669"/>
    <property type="project" value="TreeGrafter"/>
</dbReference>
<dbReference type="GO" id="GO:0046654">
    <property type="term" value="P:tetrahydrofolate biosynthetic process"/>
    <property type="evidence" value="ECO:0007669"/>
    <property type="project" value="UniProtKB-UniRule"/>
</dbReference>
<dbReference type="FunFam" id="1.10.286.10:FF:000001">
    <property type="entry name" value="GTP cyclohydrolase 1"/>
    <property type="match status" value="1"/>
</dbReference>
<dbReference type="FunFam" id="3.30.1130.10:FF:000001">
    <property type="entry name" value="GTP cyclohydrolase 1"/>
    <property type="match status" value="1"/>
</dbReference>
<dbReference type="Gene3D" id="1.10.286.10">
    <property type="match status" value="1"/>
</dbReference>
<dbReference type="Gene3D" id="3.30.1130.10">
    <property type="match status" value="1"/>
</dbReference>
<dbReference type="HAMAP" id="MF_00223">
    <property type="entry name" value="FolE"/>
    <property type="match status" value="1"/>
</dbReference>
<dbReference type="InterPro" id="IPR043133">
    <property type="entry name" value="GTP-CH-I_C/QueF"/>
</dbReference>
<dbReference type="InterPro" id="IPR043134">
    <property type="entry name" value="GTP-CH-I_N"/>
</dbReference>
<dbReference type="InterPro" id="IPR001474">
    <property type="entry name" value="GTP_CycHdrlase_I"/>
</dbReference>
<dbReference type="InterPro" id="IPR018234">
    <property type="entry name" value="GTP_CycHdrlase_I_CS"/>
</dbReference>
<dbReference type="InterPro" id="IPR020602">
    <property type="entry name" value="GTP_CycHdrlase_I_dom"/>
</dbReference>
<dbReference type="NCBIfam" id="TIGR00063">
    <property type="entry name" value="folE"/>
    <property type="match status" value="1"/>
</dbReference>
<dbReference type="NCBIfam" id="NF006825">
    <property type="entry name" value="PRK09347.1-2"/>
    <property type="match status" value="1"/>
</dbReference>
<dbReference type="NCBIfam" id="NF006826">
    <property type="entry name" value="PRK09347.1-3"/>
    <property type="match status" value="1"/>
</dbReference>
<dbReference type="PANTHER" id="PTHR11109:SF7">
    <property type="entry name" value="GTP CYCLOHYDROLASE 1"/>
    <property type="match status" value="1"/>
</dbReference>
<dbReference type="PANTHER" id="PTHR11109">
    <property type="entry name" value="GTP CYCLOHYDROLASE I"/>
    <property type="match status" value="1"/>
</dbReference>
<dbReference type="Pfam" id="PF01227">
    <property type="entry name" value="GTP_cyclohydroI"/>
    <property type="match status" value="1"/>
</dbReference>
<dbReference type="SUPFAM" id="SSF55620">
    <property type="entry name" value="Tetrahydrobiopterin biosynthesis enzymes-like"/>
    <property type="match status" value="1"/>
</dbReference>
<dbReference type="PROSITE" id="PS00859">
    <property type="entry name" value="GTP_CYCLOHYDROL_1_1"/>
    <property type="match status" value="1"/>
</dbReference>
<dbReference type="PROSITE" id="PS00860">
    <property type="entry name" value="GTP_CYCLOHYDROL_1_2"/>
    <property type="match status" value="1"/>
</dbReference>
<organism>
    <name type="scientific">Rickettsia prowazekii (strain Madrid E)</name>
    <dbReference type="NCBI Taxonomy" id="272947"/>
    <lineage>
        <taxon>Bacteria</taxon>
        <taxon>Pseudomonadati</taxon>
        <taxon>Pseudomonadota</taxon>
        <taxon>Alphaproteobacteria</taxon>
        <taxon>Rickettsiales</taxon>
        <taxon>Rickettsiaceae</taxon>
        <taxon>Rickettsieae</taxon>
        <taxon>Rickettsia</taxon>
        <taxon>typhus group</taxon>
    </lineage>
</organism>
<feature type="chain" id="PRO_0000119439" description="GTP cyclohydrolase 1">
    <location>
        <begin position="1"/>
        <end position="190"/>
    </location>
</feature>
<feature type="binding site" evidence="1">
    <location>
        <position position="80"/>
    </location>
    <ligand>
        <name>Zn(2+)</name>
        <dbReference type="ChEBI" id="CHEBI:29105"/>
    </ligand>
</feature>
<feature type="binding site" evidence="1">
    <location>
        <position position="83"/>
    </location>
    <ligand>
        <name>Zn(2+)</name>
        <dbReference type="ChEBI" id="CHEBI:29105"/>
    </ligand>
</feature>
<feature type="binding site" evidence="1">
    <location>
        <position position="151"/>
    </location>
    <ligand>
        <name>Zn(2+)</name>
        <dbReference type="ChEBI" id="CHEBI:29105"/>
    </ligand>
</feature>
<proteinExistence type="inferred from homology"/>
<gene>
    <name type="primary">folE</name>
    <name type="ordered locus">RP383</name>
</gene>
<name>GCH1_RICPR</name>
<evidence type="ECO:0000250" key="1"/>
<evidence type="ECO:0000305" key="2"/>
<protein>
    <recommendedName>
        <fullName>GTP cyclohydrolase 1</fullName>
        <ecNumber>3.5.4.16</ecNumber>
    </recommendedName>
    <alternativeName>
        <fullName>GTP cyclohydrolase I</fullName>
        <shortName>GTP-CH-I</shortName>
    </alternativeName>
</protein>
<reference key="1">
    <citation type="journal article" date="1998" name="Nature">
        <title>The genome sequence of Rickettsia prowazekii and the origin of mitochondria.</title>
        <authorList>
            <person name="Andersson S.G.E."/>
            <person name="Zomorodipour A."/>
            <person name="Andersson J.O."/>
            <person name="Sicheritz-Ponten T."/>
            <person name="Alsmark U.C.M."/>
            <person name="Podowski R.M."/>
            <person name="Naeslund A.K."/>
            <person name="Eriksson A.-S."/>
            <person name="Winkler H.H."/>
            <person name="Kurland C.G."/>
        </authorList>
    </citation>
    <scope>NUCLEOTIDE SEQUENCE [LARGE SCALE GENOMIC DNA]</scope>
    <source>
        <strain>Madrid E</strain>
    </source>
</reference>
<sequence length="190" mass="21790">MSKPTREEAKEAVRTLLKFIGEDPNREGLLKTPDRVINSYTEIFSGYGKDAQEILNTKFYDICNFQDLISLEGIKFTSFCEHHILPFNGTVHIAYIPDNCIIGVSKLARIVNIFARRLQIQEKMTLEIAESVQENLKPLGVAVKISALHSCMSMRGVMHDNSVMNTMYYTGIFAEQQKYRYEFLNLIAKR</sequence>
<keyword id="KW-0342">GTP-binding</keyword>
<keyword id="KW-0378">Hydrolase</keyword>
<keyword id="KW-0479">Metal-binding</keyword>
<keyword id="KW-0547">Nucleotide-binding</keyword>
<keyword id="KW-0554">One-carbon metabolism</keyword>
<keyword id="KW-1185">Reference proteome</keyword>
<keyword id="KW-0862">Zinc</keyword>